<accession>B1P1H2</accession>
<reference key="1">
    <citation type="journal article" date="2008" name="Cell. Mol. Life Sci.">
        <title>Molecular diversity and evolution of cystine knot toxins of the tarantula Chilobrachys jingzhao.</title>
        <authorList>
            <person name="Chen J."/>
            <person name="Deng M."/>
            <person name="He Q."/>
            <person name="Meng E."/>
            <person name="Jiang L."/>
            <person name="Liao Z."/>
            <person name="Rong M."/>
            <person name="Liang S."/>
        </authorList>
    </citation>
    <scope>NUCLEOTIDE SEQUENCE [LARGE SCALE MRNA]</scope>
    <source>
        <tissue>Venom gland</tissue>
    </source>
</reference>
<reference key="2">
    <citation type="journal article" date="2007" name="Proteomics">
        <title>Proteomic and peptidomic analysis of the venom from Chinese tarantula Chilobrachys jingzhao.</title>
        <authorList>
            <person name="Liao Z."/>
            <person name="Cao J."/>
            <person name="Li S."/>
            <person name="Yan X."/>
            <person name="Hu W."/>
            <person name="He Q."/>
            <person name="Chen J."/>
            <person name="Tang J."/>
            <person name="Xie J."/>
            <person name="Liang S."/>
        </authorList>
    </citation>
    <scope>PROTEIN SEQUENCE OF 45-78</scope>
    <scope>IDENTIFICATION BY MASS SPECTROMETRY</scope>
    <scope>AMIDATION AT TRP-78</scope>
    <source>
        <tissue>Venom</tissue>
    </source>
</reference>
<comment type="function">
    <text>Probable ion channel inhibitor.</text>
</comment>
<comment type="subcellular location">
    <subcellularLocation>
        <location>Secreted</location>
    </subcellularLocation>
</comment>
<comment type="tissue specificity">
    <text>Expressed by the venom gland.</text>
</comment>
<comment type="domain">
    <text evidence="1">The presence of a 'disulfide through disulfide knot' structurally defines this protein as a knottin.</text>
</comment>
<comment type="similarity">
    <text evidence="4">Belongs to the neurotoxin 10 (Hwtx-1) family. 35 (Jztx-27) subfamily.</text>
</comment>
<keyword id="KW-0027">Amidation</keyword>
<keyword id="KW-0903">Direct protein sequencing</keyword>
<keyword id="KW-1015">Disulfide bond</keyword>
<keyword id="KW-0872">Ion channel impairing toxin</keyword>
<keyword id="KW-0960">Knottin</keyword>
<keyword id="KW-0964">Secreted</keyword>
<keyword id="KW-0732">Signal</keyword>
<keyword id="KW-0800">Toxin</keyword>
<protein>
    <recommendedName>
        <fullName>U24-theraphotoxin-Cg1a</fullName>
        <shortName>U24-TRTX-Cg1a</shortName>
    </recommendedName>
    <alternativeName>
        <fullName>Jingzhaotoxin-27</fullName>
        <shortName>JZTX-27</shortName>
    </alternativeName>
    <alternativeName>
        <fullName>Peptide F2-36.12</fullName>
    </alternativeName>
</protein>
<organism>
    <name type="scientific">Chilobrachys guangxiensis</name>
    <name type="common">Chinese earth tiger tarantula</name>
    <name type="synonym">Chilobrachys jingzhao</name>
    <dbReference type="NCBI Taxonomy" id="278060"/>
    <lineage>
        <taxon>Eukaryota</taxon>
        <taxon>Metazoa</taxon>
        <taxon>Ecdysozoa</taxon>
        <taxon>Arthropoda</taxon>
        <taxon>Chelicerata</taxon>
        <taxon>Arachnida</taxon>
        <taxon>Araneae</taxon>
        <taxon>Mygalomorphae</taxon>
        <taxon>Theraphosidae</taxon>
        <taxon>Chilobrachys</taxon>
    </lineage>
</organism>
<name>JZT27_CHIGU</name>
<evidence type="ECO:0000250" key="1"/>
<evidence type="ECO:0000255" key="2"/>
<evidence type="ECO:0000269" key="3">
    <source>
    </source>
</evidence>
<evidence type="ECO:0000305" key="4"/>
<proteinExistence type="evidence at protein level"/>
<dbReference type="EMBL" id="EU233903">
    <property type="protein sequence ID" value="ABY71722.1"/>
    <property type="molecule type" value="mRNA"/>
</dbReference>
<dbReference type="SMR" id="B1P1H2"/>
<dbReference type="TCDB" id="8.B.3.1.6">
    <property type="family name" value="the huwentoxin-1 (huwentoxin-1) family"/>
</dbReference>
<dbReference type="ArachnoServer" id="AS000851">
    <property type="toxin name" value="U24-theraphotoxin-Cg1a"/>
</dbReference>
<dbReference type="GO" id="GO:0005576">
    <property type="term" value="C:extracellular region"/>
    <property type="evidence" value="ECO:0007669"/>
    <property type="project" value="UniProtKB-SubCell"/>
</dbReference>
<dbReference type="GO" id="GO:0008200">
    <property type="term" value="F:ion channel inhibitor activity"/>
    <property type="evidence" value="ECO:0007669"/>
    <property type="project" value="InterPro"/>
</dbReference>
<dbReference type="GO" id="GO:0090729">
    <property type="term" value="F:toxin activity"/>
    <property type="evidence" value="ECO:0007669"/>
    <property type="project" value="UniProtKB-KW"/>
</dbReference>
<dbReference type="InterPro" id="IPR011696">
    <property type="entry name" value="Huwentoxin-1"/>
</dbReference>
<dbReference type="Pfam" id="PF07740">
    <property type="entry name" value="Toxin_12"/>
    <property type="match status" value="1"/>
</dbReference>
<dbReference type="SUPFAM" id="SSF57059">
    <property type="entry name" value="omega toxin-like"/>
    <property type="match status" value="1"/>
</dbReference>
<feature type="signal peptide" evidence="2">
    <location>
        <begin position="1"/>
        <end position="19"/>
    </location>
</feature>
<feature type="propeptide" id="PRO_0000398455" evidence="3">
    <location>
        <begin position="20"/>
        <end position="44"/>
    </location>
</feature>
<feature type="peptide" id="PRO_0000398456" description="U24-theraphotoxin-Cg1a">
    <location>
        <begin position="45"/>
        <end position="78"/>
    </location>
</feature>
<feature type="modified residue" description="Tryptophan amide" evidence="3">
    <location>
        <position position="78"/>
    </location>
</feature>
<feature type="disulfide bond" evidence="1">
    <location>
        <begin position="46"/>
        <end position="61"/>
    </location>
</feature>
<feature type="disulfide bond" evidence="1">
    <location>
        <begin position="53"/>
        <end position="66"/>
    </location>
</feature>
<feature type="disulfide bond" evidence="1">
    <location>
        <begin position="60"/>
        <end position="73"/>
    </location>
</feature>
<sequence length="79" mass="9089">MRVLFIIAVLALISVGCYASEMKDRSSRNEVLSAIFAIEEPQERDCLGLFWICNYMDDKCCPGYKCERSSPWCKIDIWG</sequence>